<name>SIR_MYCTO</name>
<accession>P9WJ02</accession>
<accession>L0T9H3</accession>
<accession>P71753</accession>
<accession>Q7D781</accession>
<evidence type="ECO:0000250" key="1"/>
<evidence type="ECO:0000250" key="2">
    <source>
        <dbReference type="UniProtKB" id="P9WJ03"/>
    </source>
</evidence>
<evidence type="ECO:0000256" key="3">
    <source>
        <dbReference type="SAM" id="MobiDB-lite"/>
    </source>
</evidence>
<evidence type="ECO:0000305" key="4"/>
<gene>
    <name type="primary">sir</name>
    <name type="synonym">nirA</name>
    <name type="ordered locus">MT2461</name>
</gene>
<proteinExistence type="inferred from homology"/>
<keyword id="KW-0004">4Fe-4S</keyword>
<keyword id="KW-0349">Heme</keyword>
<keyword id="KW-0408">Iron</keyword>
<keyword id="KW-0411">Iron-sulfur</keyword>
<keyword id="KW-0479">Metal-binding</keyword>
<keyword id="KW-0560">Oxidoreductase</keyword>
<keyword id="KW-1185">Reference proteome</keyword>
<keyword id="KW-0883">Thioether bond</keyword>
<sequence length="555" mass="62112">MTTARPAKARNEGQWALGHREPLNANEELKKAGNPLDVRERIENIYAKQGFDSIDKTDLRGRFRWWGLYTQREQGYDGTWTGDDNIDKLEAKYFMMRVRCDGGALSAAALRTLGQISTEFARDTADISDRQNVQYHWIEVENVPEIWRRLDDVGLQTTEACGDCPRVVLGSPLAGESLDEVLDPTWAIEEIVRRYIGKPDFADLPRKYKTAISGLQDVAHEINDVAFIGVNHPEHGPGLDLWVGGGLSTNPMLAQRVGAWVPLGEVPEVWAAVTSVFRDYGYRRLRAKARLKFLIKDWGIAKFREVLETEYLKRPLIDGPAPEPVKHPIDHVGVQRLKNGLNAVGVAPIAGRVSGTILTAVADLMARAGSDRIRFTPYQKLVILDIPDALLDDLIAGLDALGLQSRPSHWRRNLMACSGIEFCKLSFAETRVRAQHLVPELERRLEDINSQLDVPITVNINGCPNSCARIQIADIGFKGQMIDDGHGGSVEGFQVHLGGHLGLDAGFGRKLRQHKVTSDELGDYIDRVVRNFVKHRSEGERFAQWVIRAEEDDLR</sequence>
<protein>
    <recommendedName>
        <fullName>Sulfite reductase [ferredoxin]</fullName>
        <ecNumber>1.8.7.1</ecNumber>
    </recommendedName>
</protein>
<comment type="function">
    <text evidence="2">Catalyzes the reduction of sulfite to sulfide, a step in the biosynthesis of sulfur-containing amino acids and cofactors.</text>
</comment>
<comment type="catalytic activity">
    <reaction evidence="2">
        <text>hydrogen sulfide + 6 oxidized [2Fe-2S]-[ferredoxin] + 3 H2O = sulfite + 6 reduced [2Fe-2S]-[ferredoxin] + 7 H(+)</text>
        <dbReference type="Rhea" id="RHEA:23132"/>
        <dbReference type="Rhea" id="RHEA-COMP:10000"/>
        <dbReference type="Rhea" id="RHEA-COMP:10001"/>
        <dbReference type="ChEBI" id="CHEBI:15377"/>
        <dbReference type="ChEBI" id="CHEBI:15378"/>
        <dbReference type="ChEBI" id="CHEBI:17359"/>
        <dbReference type="ChEBI" id="CHEBI:29919"/>
        <dbReference type="ChEBI" id="CHEBI:33737"/>
        <dbReference type="ChEBI" id="CHEBI:33738"/>
        <dbReference type="EC" id="1.8.7.1"/>
    </reaction>
</comment>
<comment type="cofactor">
    <cofactor evidence="1">
        <name>siroheme</name>
        <dbReference type="ChEBI" id="CHEBI:60052"/>
    </cofactor>
    <text evidence="1">Binds 1 siroheme per subunit.</text>
</comment>
<comment type="cofactor">
    <cofactor evidence="1">
        <name>[4Fe-4S] cluster</name>
        <dbReference type="ChEBI" id="CHEBI:49883"/>
    </cofactor>
    <text evidence="1">Binds 1 [4Fe-4S] cluster per subunit.</text>
</comment>
<comment type="subunit">
    <text evidence="1">Monomer.</text>
</comment>
<comment type="similarity">
    <text evidence="4">Belongs to the nitrite and sulfite reductase 4Fe-4S domain family.</text>
</comment>
<feature type="chain" id="PRO_0000427915" description="Sulfite reductase [ferredoxin]">
    <location>
        <begin position="1"/>
        <end position="555"/>
    </location>
</feature>
<feature type="region of interest" description="Disordered" evidence="3">
    <location>
        <begin position="1"/>
        <end position="22"/>
    </location>
</feature>
<feature type="binding site" evidence="1">
    <location>
        <position position="417"/>
    </location>
    <ligand>
        <name>[4Fe-4S] cluster</name>
        <dbReference type="ChEBI" id="CHEBI:49883"/>
    </ligand>
</feature>
<feature type="binding site" evidence="1">
    <location>
        <position position="423"/>
    </location>
    <ligand>
        <name>[4Fe-4S] cluster</name>
        <dbReference type="ChEBI" id="CHEBI:49883"/>
    </ligand>
</feature>
<feature type="binding site" evidence="1">
    <location>
        <position position="463"/>
    </location>
    <ligand>
        <name>[4Fe-4S] cluster</name>
        <dbReference type="ChEBI" id="CHEBI:49883"/>
    </ligand>
</feature>
<feature type="binding site" evidence="1">
    <location>
        <position position="467"/>
    </location>
    <ligand>
        <name>[4Fe-4S] cluster</name>
        <dbReference type="ChEBI" id="CHEBI:49883"/>
    </ligand>
</feature>
<feature type="binding site" description="axial binding residue" evidence="1">
    <location>
        <position position="467"/>
    </location>
    <ligand>
        <name>siroheme</name>
        <dbReference type="ChEBI" id="CHEBI:60052"/>
    </ligand>
    <ligandPart>
        <name>Fe</name>
        <dbReference type="ChEBI" id="CHEBI:18248"/>
    </ligandPart>
</feature>
<feature type="cross-link" description="3'-(S-cysteinyl)-tyrosine (Tyr-Cys)" evidence="1">
    <location>
        <begin position="69"/>
        <end position="161"/>
    </location>
</feature>
<reference key="1">
    <citation type="journal article" date="2002" name="J. Bacteriol.">
        <title>Whole-genome comparison of Mycobacterium tuberculosis clinical and laboratory strains.</title>
        <authorList>
            <person name="Fleischmann R.D."/>
            <person name="Alland D."/>
            <person name="Eisen J.A."/>
            <person name="Carpenter L."/>
            <person name="White O."/>
            <person name="Peterson J.D."/>
            <person name="DeBoy R.T."/>
            <person name="Dodson R.J."/>
            <person name="Gwinn M.L."/>
            <person name="Haft D.H."/>
            <person name="Hickey E.K."/>
            <person name="Kolonay J.F."/>
            <person name="Nelson W.C."/>
            <person name="Umayam L.A."/>
            <person name="Ermolaeva M.D."/>
            <person name="Salzberg S.L."/>
            <person name="Delcher A."/>
            <person name="Utterback T.R."/>
            <person name="Weidman J.F."/>
            <person name="Khouri H.M."/>
            <person name="Gill J."/>
            <person name="Mikula A."/>
            <person name="Bishai W."/>
            <person name="Jacobs W.R. Jr."/>
            <person name="Venter J.C."/>
            <person name="Fraser C.M."/>
        </authorList>
    </citation>
    <scope>NUCLEOTIDE SEQUENCE [LARGE SCALE GENOMIC DNA]</scope>
    <source>
        <strain>CDC 1551 / Oshkosh</strain>
    </source>
</reference>
<dbReference type="EC" id="1.8.7.1"/>
<dbReference type="EMBL" id="AE000516">
    <property type="protein sequence ID" value="AAK46756.1"/>
    <property type="molecule type" value="Genomic_DNA"/>
</dbReference>
<dbReference type="PIR" id="B70682">
    <property type="entry name" value="B70682"/>
</dbReference>
<dbReference type="SMR" id="P9WJ02"/>
<dbReference type="KEGG" id="mtc:MT2461"/>
<dbReference type="HOGENOM" id="CLU_015667_2_3_11"/>
<dbReference type="Proteomes" id="UP000001020">
    <property type="component" value="Chromosome"/>
</dbReference>
<dbReference type="GO" id="GO:0051539">
    <property type="term" value="F:4 iron, 4 sulfur cluster binding"/>
    <property type="evidence" value="ECO:0007669"/>
    <property type="project" value="UniProtKB-KW"/>
</dbReference>
<dbReference type="GO" id="GO:0020037">
    <property type="term" value="F:heme binding"/>
    <property type="evidence" value="ECO:0007669"/>
    <property type="project" value="InterPro"/>
</dbReference>
<dbReference type="GO" id="GO:0046872">
    <property type="term" value="F:metal ion binding"/>
    <property type="evidence" value="ECO:0007669"/>
    <property type="project" value="UniProtKB-KW"/>
</dbReference>
<dbReference type="GO" id="GO:0050311">
    <property type="term" value="F:sulfite reductase (ferredoxin) activity"/>
    <property type="evidence" value="ECO:0007669"/>
    <property type="project" value="UniProtKB-EC"/>
</dbReference>
<dbReference type="FunFam" id="3.30.413.10:FF:000009">
    <property type="entry name" value="Sulfite reductase [ferredoxin]"/>
    <property type="match status" value="1"/>
</dbReference>
<dbReference type="FunFam" id="3.30.413.10:FF:000013">
    <property type="entry name" value="Sulfite reductase [ferredoxin]"/>
    <property type="match status" value="1"/>
</dbReference>
<dbReference type="Gene3D" id="3.90.480.20">
    <property type="match status" value="1"/>
</dbReference>
<dbReference type="Gene3D" id="3.30.413.10">
    <property type="entry name" value="Sulfite Reductase Hemoprotein, domain 1"/>
    <property type="match status" value="2"/>
</dbReference>
<dbReference type="InterPro" id="IPR051329">
    <property type="entry name" value="NIR_SIR_4Fe-4S"/>
</dbReference>
<dbReference type="InterPro" id="IPR005117">
    <property type="entry name" value="NiRdtase/SiRdtase_haem-b_fer"/>
</dbReference>
<dbReference type="InterPro" id="IPR036136">
    <property type="entry name" value="Nit/Sulf_reduc_fer-like_dom_sf"/>
</dbReference>
<dbReference type="InterPro" id="IPR006067">
    <property type="entry name" value="NO2/SO3_Rdtase_4Fe4S_dom"/>
</dbReference>
<dbReference type="InterPro" id="IPR045854">
    <property type="entry name" value="NO2/SO3_Rdtase_4Fe4S_sf"/>
</dbReference>
<dbReference type="InterPro" id="IPR006066">
    <property type="entry name" value="NO2/SO3_Rdtase_FeS/sirohaem_BS"/>
</dbReference>
<dbReference type="PANTHER" id="PTHR32439">
    <property type="entry name" value="FERREDOXIN--NITRITE REDUCTASE, CHLOROPLASTIC"/>
    <property type="match status" value="1"/>
</dbReference>
<dbReference type="PANTHER" id="PTHR32439:SF0">
    <property type="entry name" value="FERREDOXIN--NITRITE REDUCTASE, CHLOROPLASTIC"/>
    <property type="match status" value="1"/>
</dbReference>
<dbReference type="Pfam" id="PF01077">
    <property type="entry name" value="NIR_SIR"/>
    <property type="match status" value="2"/>
</dbReference>
<dbReference type="Pfam" id="PF03460">
    <property type="entry name" value="NIR_SIR_ferr"/>
    <property type="match status" value="2"/>
</dbReference>
<dbReference type="PRINTS" id="PR00397">
    <property type="entry name" value="SIROHAEM"/>
</dbReference>
<dbReference type="SUPFAM" id="SSF56014">
    <property type="entry name" value="Nitrite and sulphite reductase 4Fe-4S domain-like"/>
    <property type="match status" value="2"/>
</dbReference>
<dbReference type="SUPFAM" id="SSF55124">
    <property type="entry name" value="Nitrite/Sulfite reductase N-terminal domain-like"/>
    <property type="match status" value="2"/>
</dbReference>
<dbReference type="PROSITE" id="PS00365">
    <property type="entry name" value="NIR_SIR"/>
    <property type="match status" value="1"/>
</dbReference>
<organism>
    <name type="scientific">Mycobacterium tuberculosis (strain CDC 1551 / Oshkosh)</name>
    <dbReference type="NCBI Taxonomy" id="83331"/>
    <lineage>
        <taxon>Bacteria</taxon>
        <taxon>Bacillati</taxon>
        <taxon>Actinomycetota</taxon>
        <taxon>Actinomycetes</taxon>
        <taxon>Mycobacteriales</taxon>
        <taxon>Mycobacteriaceae</taxon>
        <taxon>Mycobacterium</taxon>
        <taxon>Mycobacterium tuberculosis complex</taxon>
    </lineage>
</organism>